<name>LGT_ACIBS</name>
<proteinExistence type="inferred from homology"/>
<comment type="function">
    <text evidence="1">Catalyzes the transfer of the diacylglyceryl group from phosphatidylglycerol to the sulfhydryl group of the N-terminal cysteine of a prolipoprotein, the first step in the formation of mature lipoproteins.</text>
</comment>
<comment type="catalytic activity">
    <reaction evidence="1">
        <text>L-cysteinyl-[prolipoprotein] + a 1,2-diacyl-sn-glycero-3-phospho-(1'-sn-glycerol) = an S-1,2-diacyl-sn-glyceryl-L-cysteinyl-[prolipoprotein] + sn-glycerol 1-phosphate + H(+)</text>
        <dbReference type="Rhea" id="RHEA:56712"/>
        <dbReference type="Rhea" id="RHEA-COMP:14679"/>
        <dbReference type="Rhea" id="RHEA-COMP:14680"/>
        <dbReference type="ChEBI" id="CHEBI:15378"/>
        <dbReference type="ChEBI" id="CHEBI:29950"/>
        <dbReference type="ChEBI" id="CHEBI:57685"/>
        <dbReference type="ChEBI" id="CHEBI:64716"/>
        <dbReference type="ChEBI" id="CHEBI:140658"/>
        <dbReference type="EC" id="2.5.1.145"/>
    </reaction>
</comment>
<comment type="pathway">
    <text evidence="1">Protein modification; lipoprotein biosynthesis (diacylglyceryl transfer).</text>
</comment>
<comment type="subcellular location">
    <subcellularLocation>
        <location evidence="1">Cell inner membrane</location>
        <topology evidence="1">Multi-pass membrane protein</topology>
    </subcellularLocation>
</comment>
<comment type="similarity">
    <text evidence="1">Belongs to the Lgt family.</text>
</comment>
<protein>
    <recommendedName>
        <fullName evidence="1">Phosphatidylglycerol--prolipoprotein diacylglyceryl transferase</fullName>
        <ecNumber evidence="1">2.5.1.145</ecNumber>
    </recommendedName>
</protein>
<gene>
    <name evidence="1" type="primary">lgt</name>
    <name type="ordered locus">ABSDF3048</name>
</gene>
<reference key="1">
    <citation type="journal article" date="2008" name="PLoS ONE">
        <title>Comparative analysis of Acinetobacters: three genomes for three lifestyles.</title>
        <authorList>
            <person name="Vallenet D."/>
            <person name="Nordmann P."/>
            <person name="Barbe V."/>
            <person name="Poirel L."/>
            <person name="Mangenot S."/>
            <person name="Bataille E."/>
            <person name="Dossat C."/>
            <person name="Gas S."/>
            <person name="Kreimeyer A."/>
            <person name="Lenoble P."/>
            <person name="Oztas S."/>
            <person name="Poulain J."/>
            <person name="Segurens B."/>
            <person name="Robert C."/>
            <person name="Abergel C."/>
            <person name="Claverie J.-M."/>
            <person name="Raoult D."/>
            <person name="Medigue C."/>
            <person name="Weissenbach J."/>
            <person name="Cruveiller S."/>
        </authorList>
    </citation>
    <scope>NUCLEOTIDE SEQUENCE [LARGE SCALE GENOMIC DNA]</scope>
    <source>
        <strain>SDF</strain>
    </source>
</reference>
<organism>
    <name type="scientific">Acinetobacter baumannii (strain SDF)</name>
    <dbReference type="NCBI Taxonomy" id="509170"/>
    <lineage>
        <taxon>Bacteria</taxon>
        <taxon>Pseudomonadati</taxon>
        <taxon>Pseudomonadota</taxon>
        <taxon>Gammaproteobacteria</taxon>
        <taxon>Moraxellales</taxon>
        <taxon>Moraxellaceae</taxon>
        <taxon>Acinetobacter</taxon>
        <taxon>Acinetobacter calcoaceticus/baumannii complex</taxon>
    </lineage>
</organism>
<dbReference type="EC" id="2.5.1.145" evidence="1"/>
<dbReference type="EMBL" id="CU468230">
    <property type="protein sequence ID" value="CAP02334.1"/>
    <property type="molecule type" value="Genomic_DNA"/>
</dbReference>
<dbReference type="SMR" id="B0VL66"/>
<dbReference type="KEGG" id="abm:ABSDF3048"/>
<dbReference type="HOGENOM" id="CLU_013386_1_0_6"/>
<dbReference type="UniPathway" id="UPA00664"/>
<dbReference type="Proteomes" id="UP000001741">
    <property type="component" value="Chromosome"/>
</dbReference>
<dbReference type="GO" id="GO:0005886">
    <property type="term" value="C:plasma membrane"/>
    <property type="evidence" value="ECO:0007669"/>
    <property type="project" value="UniProtKB-SubCell"/>
</dbReference>
<dbReference type="GO" id="GO:0008961">
    <property type="term" value="F:phosphatidylglycerol-prolipoprotein diacylglyceryl transferase activity"/>
    <property type="evidence" value="ECO:0007669"/>
    <property type="project" value="UniProtKB-UniRule"/>
</dbReference>
<dbReference type="GO" id="GO:0042158">
    <property type="term" value="P:lipoprotein biosynthetic process"/>
    <property type="evidence" value="ECO:0007669"/>
    <property type="project" value="UniProtKB-UniRule"/>
</dbReference>
<dbReference type="HAMAP" id="MF_01147">
    <property type="entry name" value="Lgt"/>
    <property type="match status" value="1"/>
</dbReference>
<dbReference type="InterPro" id="IPR001640">
    <property type="entry name" value="Lgt"/>
</dbReference>
<dbReference type="NCBIfam" id="TIGR00544">
    <property type="entry name" value="lgt"/>
    <property type="match status" value="1"/>
</dbReference>
<dbReference type="PANTHER" id="PTHR30589:SF0">
    <property type="entry name" value="PHOSPHATIDYLGLYCEROL--PROLIPOPROTEIN DIACYLGLYCERYL TRANSFERASE"/>
    <property type="match status" value="1"/>
</dbReference>
<dbReference type="PANTHER" id="PTHR30589">
    <property type="entry name" value="PROLIPOPROTEIN DIACYLGLYCERYL TRANSFERASE"/>
    <property type="match status" value="1"/>
</dbReference>
<dbReference type="Pfam" id="PF01790">
    <property type="entry name" value="LGT"/>
    <property type="match status" value="1"/>
</dbReference>
<dbReference type="PROSITE" id="PS01311">
    <property type="entry name" value="LGT"/>
    <property type="match status" value="1"/>
</dbReference>
<accession>B0VL66</accession>
<keyword id="KW-0997">Cell inner membrane</keyword>
<keyword id="KW-1003">Cell membrane</keyword>
<keyword id="KW-0472">Membrane</keyword>
<keyword id="KW-0808">Transferase</keyword>
<keyword id="KW-0812">Transmembrane</keyword>
<keyword id="KW-1133">Transmembrane helix</keyword>
<sequence>MLTYPNIDPVAIHLGPLQVHWYGLMYLLAFLCAWGLASYRTKQRDGWTSDMVSDLVFYGALGVVLGGRIGYVLFYEFDKFLENPIWLFQVWTGGMSFHGGFLGVMIAMLFWCKKYQKTWFQTLDFIAPCVPTGLMLGRIGNFIGGELYGRAVTDPNYPFGMIFPTDPLHLVRHPSQIYQALCEGLLLFIILWWFSSKPRPRMAVSALFLMGYGVARFVMEFFRQPDADQGFILFGWMTKGQILTVPMLLIGLWMMWYAYQKKIYDWGPQKNS</sequence>
<evidence type="ECO:0000255" key="1">
    <source>
        <dbReference type="HAMAP-Rule" id="MF_01147"/>
    </source>
</evidence>
<feature type="chain" id="PRO_1000137391" description="Phosphatidylglycerol--prolipoprotein diacylglyceryl transferase">
    <location>
        <begin position="1"/>
        <end position="272"/>
    </location>
</feature>
<feature type="transmembrane region" description="Helical" evidence="1">
    <location>
        <begin position="17"/>
        <end position="37"/>
    </location>
</feature>
<feature type="transmembrane region" description="Helical" evidence="1">
    <location>
        <begin position="55"/>
        <end position="75"/>
    </location>
</feature>
<feature type="transmembrane region" description="Helical" evidence="1">
    <location>
        <begin position="90"/>
        <end position="110"/>
    </location>
</feature>
<feature type="transmembrane region" description="Helical" evidence="1">
    <location>
        <begin position="125"/>
        <end position="145"/>
    </location>
</feature>
<feature type="transmembrane region" description="Helical" evidence="1">
    <location>
        <begin position="174"/>
        <end position="194"/>
    </location>
</feature>
<feature type="transmembrane region" description="Helical" evidence="1">
    <location>
        <begin position="202"/>
        <end position="222"/>
    </location>
</feature>
<feature type="transmembrane region" description="Helical" evidence="1">
    <location>
        <begin position="230"/>
        <end position="250"/>
    </location>
</feature>
<feature type="binding site" evidence="1">
    <location>
        <position position="138"/>
    </location>
    <ligand>
        <name>a 1,2-diacyl-sn-glycero-3-phospho-(1'-sn-glycerol)</name>
        <dbReference type="ChEBI" id="CHEBI:64716"/>
    </ligand>
</feature>